<feature type="transit peptide" description="Mitochondrion" evidence="3">
    <location>
        <begin position="1"/>
        <end position="13"/>
    </location>
</feature>
<feature type="chain" id="PRO_0000035990" description="Cytochrome b-c1 complex subunit 6, mitochondrial">
    <location>
        <begin position="14"/>
        <end position="91"/>
    </location>
</feature>
<feature type="region of interest" description="Disordered" evidence="4">
    <location>
        <begin position="1"/>
        <end position="30"/>
    </location>
</feature>
<feature type="compositionally biased region" description="Acidic residues" evidence="4">
    <location>
        <begin position="14"/>
        <end position="27"/>
    </location>
</feature>
<feature type="modified residue" description="N6-acetyllysine" evidence="3">
    <location>
        <position position="42"/>
    </location>
</feature>
<feature type="modified residue" description="N6-acetyllysine" evidence="3">
    <location>
        <position position="85"/>
    </location>
</feature>
<feature type="disulfide bond" evidence="1">
    <location>
        <begin position="37"/>
        <end position="81"/>
    </location>
</feature>
<feature type="disulfide bond" evidence="1">
    <location>
        <begin position="53"/>
        <end position="67"/>
    </location>
</feature>
<feature type="sequence variant" id="VAR_034579" description="In dbSNP:rs34813470.">
    <original>E</original>
    <variation>Q</variation>
    <location>
        <position position="51"/>
    </location>
</feature>
<feature type="sequence conflict" description="In Ref. 1; AAA36317/CAA68733." evidence="7" ref="1">
    <original>V</original>
    <variation>D</variation>
    <location>
        <position position="57"/>
    </location>
</feature>
<feature type="helix" evidence="8">
    <location>
        <begin position="20"/>
        <end position="26"/>
    </location>
</feature>
<feature type="helix" evidence="8">
    <location>
        <begin position="29"/>
        <end position="39"/>
    </location>
</feature>
<feature type="helix" evidence="8">
    <location>
        <begin position="41"/>
        <end position="58"/>
    </location>
</feature>
<feature type="helix" evidence="8">
    <location>
        <begin position="68"/>
        <end position="83"/>
    </location>
</feature>
<feature type="turn" evidence="8">
    <location>
        <begin position="87"/>
        <end position="89"/>
    </location>
</feature>
<accession>P07919</accession>
<accession>B2R4V9</accession>
<accession>D3DQ18</accession>
<accession>Q5TDF6</accession>
<accession>Q6LDB8</accession>
<accession>Q9BQ91</accession>
<gene>
    <name type="primary">UQCRH</name>
</gene>
<dbReference type="EMBL" id="M36647">
    <property type="protein sequence ID" value="AAA36317.1"/>
    <property type="molecule type" value="mRNA"/>
</dbReference>
<dbReference type="EMBL" id="Y00764">
    <property type="protein sequence ID" value="CAA68733.1"/>
    <property type="molecule type" value="mRNA"/>
</dbReference>
<dbReference type="EMBL" id="BT007070">
    <property type="protein sequence ID" value="AAP35733.1"/>
    <property type="molecule type" value="mRNA"/>
</dbReference>
<dbReference type="EMBL" id="AK311967">
    <property type="protein sequence ID" value="BAG34906.1"/>
    <property type="molecule type" value="mRNA"/>
</dbReference>
<dbReference type="EMBL" id="AL122001">
    <property type="status" value="NOT_ANNOTATED_CDS"/>
    <property type="molecule type" value="Genomic_DNA"/>
</dbReference>
<dbReference type="EMBL" id="CH471059">
    <property type="protein sequence ID" value="EAX06922.1"/>
    <property type="molecule type" value="Genomic_DNA"/>
</dbReference>
<dbReference type="EMBL" id="CH471059">
    <property type="protein sequence ID" value="EAX06924.1"/>
    <property type="molecule type" value="Genomic_DNA"/>
</dbReference>
<dbReference type="EMBL" id="BC001426">
    <property type="protein sequence ID" value="AAH01426.1"/>
    <property type="molecule type" value="mRNA"/>
</dbReference>
<dbReference type="EMBL" id="BC001934">
    <property type="protein sequence ID" value="AAH01934.1"/>
    <property type="molecule type" value="mRNA"/>
</dbReference>
<dbReference type="EMBL" id="BC015177">
    <property type="protein sequence ID" value="AAH15177.1"/>
    <property type="molecule type" value="mRNA"/>
</dbReference>
<dbReference type="EMBL" id="BC107703">
    <property type="protein sequence ID" value="AAI07704.1"/>
    <property type="molecule type" value="mRNA"/>
</dbReference>
<dbReference type="EMBL" id="S61826">
    <property type="protein sequence ID" value="AAD13930.1"/>
    <property type="molecule type" value="Genomic_DNA"/>
</dbReference>
<dbReference type="CCDS" id="CCDS30704.1"/>
<dbReference type="PIR" id="S00219">
    <property type="entry name" value="S00219"/>
</dbReference>
<dbReference type="RefSeq" id="NP_005995.2">
    <property type="nucleotide sequence ID" value="NM_006004.4"/>
</dbReference>
<dbReference type="PDB" id="5XTE">
    <property type="method" value="EM"/>
    <property type="resolution" value="3.40 A"/>
    <property type="chains" value="E/R=17-91"/>
</dbReference>
<dbReference type="PDB" id="5XTH">
    <property type="method" value="EM"/>
    <property type="resolution" value="3.90 A"/>
    <property type="chains" value="AE/AR=18-91"/>
</dbReference>
<dbReference type="PDB" id="5XTI">
    <property type="method" value="EM"/>
    <property type="resolution" value="17.40 A"/>
    <property type="chains" value="AE/AR=18-91"/>
</dbReference>
<dbReference type="PDBsum" id="5XTE"/>
<dbReference type="PDBsum" id="5XTH"/>
<dbReference type="PDBsum" id="5XTI"/>
<dbReference type="SMR" id="P07919"/>
<dbReference type="BioGRID" id="113234">
    <property type="interactions" value="153"/>
</dbReference>
<dbReference type="ComplexPortal" id="CPX-560">
    <property type="entry name" value="Mitochondrial respiratory chain complex III"/>
</dbReference>
<dbReference type="FunCoup" id="P07919">
    <property type="interactions" value="1138"/>
</dbReference>
<dbReference type="IntAct" id="P07919">
    <property type="interactions" value="76"/>
</dbReference>
<dbReference type="MINT" id="P07919"/>
<dbReference type="STRING" id="9606.ENSP00000309565"/>
<dbReference type="DrugBank" id="DB07763">
    <property type="generic name" value="(5S)-3-ANILINO-5-(2,4-DIFLUOROPHENYL)-5-METHYL-1,3-OXAZOLIDINE-2,4-DIONE"/>
</dbReference>
<dbReference type="DrugBank" id="DB07778">
    <property type="generic name" value="(S)-famoxadone"/>
</dbReference>
<dbReference type="DrugBank" id="DB04141">
    <property type="generic name" value="2-Hexyloxy-6-Hydroxymethyl-Tetrahydro-Pyran-3,4,5-Triol"/>
</dbReference>
<dbReference type="DrugBank" id="DB08453">
    <property type="generic name" value="2-Nonyl-4-quinolinol 1-oxide"/>
</dbReference>
<dbReference type="DrugBank" id="DB04799">
    <property type="generic name" value="6-Hydroxy-5-undecyl-4,7-benzothiazoledione"/>
</dbReference>
<dbReference type="DrugBank" id="DB07401">
    <property type="generic name" value="Azoxystrobin"/>
</dbReference>
<dbReference type="DrugBank" id="DB08330">
    <property type="generic name" value="METHYL (2Z)-3-METHOXY-2-{2-[(E)-2-PHENYLVINYL]PHENYL}ACRYLATE"/>
</dbReference>
<dbReference type="DrugBank" id="DB08690">
    <property type="generic name" value="Ubiquinone Q2"/>
</dbReference>
<dbReference type="iPTMnet" id="P07919"/>
<dbReference type="PhosphoSitePlus" id="P07919"/>
<dbReference type="BioMuta" id="UQCRH"/>
<dbReference type="DMDM" id="20455515"/>
<dbReference type="jPOST" id="P07919"/>
<dbReference type="MassIVE" id="P07919"/>
<dbReference type="PaxDb" id="9606-ENSP00000309565"/>
<dbReference type="PeptideAtlas" id="P07919"/>
<dbReference type="ProteomicsDB" id="52042"/>
<dbReference type="Pumba" id="P07919"/>
<dbReference type="TopDownProteomics" id="P07919"/>
<dbReference type="Antibodypedia" id="32789">
    <property type="antibodies" value="45 antibodies from 17 providers"/>
</dbReference>
<dbReference type="DNASU" id="7388"/>
<dbReference type="Ensembl" id="ENST00000311672.10">
    <property type="protein sequence ID" value="ENSP00000309565.5"/>
    <property type="gene ID" value="ENSG00000173660.12"/>
</dbReference>
<dbReference type="GeneID" id="7388"/>
<dbReference type="KEGG" id="hsa:7388"/>
<dbReference type="MANE-Select" id="ENST00000311672.10">
    <property type="protein sequence ID" value="ENSP00000309565.5"/>
    <property type="RefSeq nucleotide sequence ID" value="NM_006004.4"/>
    <property type="RefSeq protein sequence ID" value="NP_005995.2"/>
</dbReference>
<dbReference type="UCSC" id="uc001cpp.4">
    <property type="organism name" value="human"/>
</dbReference>
<dbReference type="AGR" id="HGNC:12590"/>
<dbReference type="CTD" id="7388"/>
<dbReference type="DisGeNET" id="7388"/>
<dbReference type="GeneCards" id="UQCRH"/>
<dbReference type="HGNC" id="HGNC:12590">
    <property type="gene designation" value="UQCRH"/>
</dbReference>
<dbReference type="HPA" id="ENSG00000173660">
    <property type="expression patterns" value="Low tissue specificity"/>
</dbReference>
<dbReference type="MalaCards" id="UQCRH"/>
<dbReference type="MIM" id="613844">
    <property type="type" value="gene"/>
</dbReference>
<dbReference type="MIM" id="620137">
    <property type="type" value="phenotype"/>
</dbReference>
<dbReference type="neXtProt" id="NX_P07919"/>
<dbReference type="OpenTargets" id="ENSG00000173660"/>
<dbReference type="PharmGKB" id="PA37220"/>
<dbReference type="VEuPathDB" id="HostDB:ENSG00000173660"/>
<dbReference type="eggNOG" id="KOG4763">
    <property type="taxonomic scope" value="Eukaryota"/>
</dbReference>
<dbReference type="GeneTree" id="ENSGT00390000003860"/>
<dbReference type="HOGENOM" id="CLU_115913_3_0_1"/>
<dbReference type="InParanoid" id="P07919"/>
<dbReference type="OMA" id="NTCNDRV"/>
<dbReference type="OrthoDB" id="9643667at2759"/>
<dbReference type="PAN-GO" id="P07919">
    <property type="GO annotations" value="2 GO annotations based on evolutionary models"/>
</dbReference>
<dbReference type="PhylomeDB" id="P07919"/>
<dbReference type="TreeFam" id="TF105036"/>
<dbReference type="BioCyc" id="MetaCyc:HS10708-MONOMER"/>
<dbReference type="PathwayCommons" id="P07919"/>
<dbReference type="Reactome" id="R-HSA-611105">
    <property type="pathway name" value="Respiratory electron transport"/>
</dbReference>
<dbReference type="Reactome" id="R-HSA-9865881">
    <property type="pathway name" value="Complex III assembly"/>
</dbReference>
<dbReference type="SignaLink" id="P07919"/>
<dbReference type="SIGNOR" id="P07919"/>
<dbReference type="BioGRID-ORCS" id="7388">
    <property type="hits" value="537 hits in 1153 CRISPR screens"/>
</dbReference>
<dbReference type="ChiTaRS" id="UQCRH">
    <property type="organism name" value="human"/>
</dbReference>
<dbReference type="GeneWiki" id="UQCRH"/>
<dbReference type="GenomeRNAi" id="7388"/>
<dbReference type="Pharos" id="P07919">
    <property type="development level" value="Tbio"/>
</dbReference>
<dbReference type="PRO" id="PR:P07919"/>
<dbReference type="Proteomes" id="UP000005640">
    <property type="component" value="Chromosome 1"/>
</dbReference>
<dbReference type="RNAct" id="P07919">
    <property type="molecule type" value="protein"/>
</dbReference>
<dbReference type="Bgee" id="ENSG00000173660">
    <property type="expression patterns" value="Expressed in cerebellar vermis and 106 other cell types or tissues"/>
</dbReference>
<dbReference type="ExpressionAtlas" id="P07919">
    <property type="expression patterns" value="baseline and differential"/>
</dbReference>
<dbReference type="GO" id="GO:0005743">
    <property type="term" value="C:mitochondrial inner membrane"/>
    <property type="evidence" value="ECO:0000314"/>
    <property type="project" value="ComplexPortal"/>
</dbReference>
<dbReference type="GO" id="GO:0005739">
    <property type="term" value="C:mitochondrion"/>
    <property type="evidence" value="ECO:0007005"/>
    <property type="project" value="UniProtKB"/>
</dbReference>
<dbReference type="GO" id="GO:0098803">
    <property type="term" value="C:respiratory chain complex"/>
    <property type="evidence" value="ECO:0000304"/>
    <property type="project" value="ProtInc"/>
</dbReference>
<dbReference type="GO" id="GO:0045275">
    <property type="term" value="C:respiratory chain complex III"/>
    <property type="evidence" value="ECO:0000318"/>
    <property type="project" value="GO_Central"/>
</dbReference>
<dbReference type="GO" id="GO:0008121">
    <property type="term" value="F:ubiquinol-cytochrome-c reductase activity"/>
    <property type="evidence" value="ECO:0000315"/>
    <property type="project" value="UniProtKB"/>
</dbReference>
<dbReference type="GO" id="GO:0009060">
    <property type="term" value="P:aerobic respiration"/>
    <property type="evidence" value="ECO:0000304"/>
    <property type="project" value="ProtInc"/>
</dbReference>
<dbReference type="GO" id="GO:0045333">
    <property type="term" value="P:cellular respiration"/>
    <property type="evidence" value="ECO:0000303"/>
    <property type="project" value="ComplexPortal"/>
</dbReference>
<dbReference type="GO" id="GO:0006122">
    <property type="term" value="P:mitochondrial electron transport, ubiquinol to cytochrome c"/>
    <property type="evidence" value="ECO:0000318"/>
    <property type="project" value="GO_Central"/>
</dbReference>
<dbReference type="GO" id="GO:0006119">
    <property type="term" value="P:oxidative phosphorylation"/>
    <property type="evidence" value="ECO:0000304"/>
    <property type="project" value="ProtInc"/>
</dbReference>
<dbReference type="FunFam" id="1.10.287.20:FF:000002">
    <property type="entry name" value="Cytochrome b-c1 complex subunit 6"/>
    <property type="match status" value="1"/>
</dbReference>
<dbReference type="Gene3D" id="1.10.287.20">
    <property type="entry name" value="Ubiquinol-cytochrome C reductase hinge domain"/>
    <property type="match status" value="1"/>
</dbReference>
<dbReference type="InterPro" id="IPR003422">
    <property type="entry name" value="Cyt_b-c1_6"/>
</dbReference>
<dbReference type="InterPro" id="IPR023184">
    <property type="entry name" value="Ubol_cytC_Rdtase_hinge_dom"/>
</dbReference>
<dbReference type="InterPro" id="IPR036811">
    <property type="entry name" value="Ubol_cytC_Rdtase_hinge_dom_sf"/>
</dbReference>
<dbReference type="PANTHER" id="PTHR15336:SF0">
    <property type="entry name" value="CYTOCHROME B-C1 COMPLEX SUBUNIT 6, MITOCHONDRIAL"/>
    <property type="match status" value="1"/>
</dbReference>
<dbReference type="PANTHER" id="PTHR15336">
    <property type="entry name" value="UBIQUINOL-CYTOCHROME C REDUCTASE COMPLEX 7.8 KDA PROTEIN"/>
    <property type="match status" value="1"/>
</dbReference>
<dbReference type="Pfam" id="PF02320">
    <property type="entry name" value="UCR_hinge"/>
    <property type="match status" value="1"/>
</dbReference>
<dbReference type="PIRSF" id="PIRSF000019">
    <property type="entry name" value="Bc1_11K"/>
    <property type="match status" value="1"/>
</dbReference>
<dbReference type="SUPFAM" id="SSF81531">
    <property type="entry name" value="Non-heme 11 kDa protein of cytochrome bc1 complex (Ubiquinol-cytochrome c reductase)"/>
    <property type="match status" value="1"/>
</dbReference>
<organism>
    <name type="scientific">Homo sapiens</name>
    <name type="common">Human</name>
    <dbReference type="NCBI Taxonomy" id="9606"/>
    <lineage>
        <taxon>Eukaryota</taxon>
        <taxon>Metazoa</taxon>
        <taxon>Chordata</taxon>
        <taxon>Craniata</taxon>
        <taxon>Vertebrata</taxon>
        <taxon>Euteleostomi</taxon>
        <taxon>Mammalia</taxon>
        <taxon>Eutheria</taxon>
        <taxon>Euarchontoglires</taxon>
        <taxon>Primates</taxon>
        <taxon>Haplorrhini</taxon>
        <taxon>Catarrhini</taxon>
        <taxon>Hominidae</taxon>
        <taxon>Homo</taxon>
    </lineage>
</organism>
<keyword id="KW-0002">3D-structure</keyword>
<keyword id="KW-0007">Acetylation</keyword>
<keyword id="KW-1015">Disulfide bond</keyword>
<keyword id="KW-0249">Electron transport</keyword>
<keyword id="KW-0472">Membrane</keyword>
<keyword id="KW-0496">Mitochondrion</keyword>
<keyword id="KW-0999">Mitochondrion inner membrane</keyword>
<keyword id="KW-1274">Primary mitochondrial disease</keyword>
<keyword id="KW-1267">Proteomics identification</keyword>
<keyword id="KW-1185">Reference proteome</keyword>
<keyword id="KW-0679">Respiratory chain</keyword>
<keyword id="KW-0809">Transit peptide</keyword>
<keyword id="KW-0813">Transport</keyword>
<comment type="function">
    <text evidence="6">Component of the ubiquinol-cytochrome c oxidoreductase, a multisubunit transmembrane complex that is part of the mitochondrial electron transport chain which drives oxidative phosphorylation. The respiratory chain contains 3 multisubunit complexes succinate dehydrogenase (complex II, CII), ubiquinol-cytochrome c oxidoreductase (cytochrome b-c1 complex, complex III, CIII) and cytochrome c oxidase (complex IV, CIV), that cooperate to transfer electrons derived from NADH and succinate to molecular oxygen, creating an electrochemical gradient over the inner membrane that drives transmembrane transport and the ATP synthase. The cytochrome b-c1 complex catalyzes electron transfer from ubiquinol to cytochrome c, linking this redox reaction to translocation of protons across the mitochondrial inner membrane, with protons being carried across the membrane as hydrogens on the quinol. In the process called Q cycle, 2 protons are consumed from the matrix, 4 protons are released into the intermembrane space and 2 electrons are passed to cytochrome c.</text>
</comment>
<comment type="subunit">
    <text evidence="1 5">Component of the ubiquinol-cytochrome c oxidoreductase (cytochrome b-c1 complex, complex III, CIII), a multisubunit enzyme composed of 11 subunits. The complex is composed of 3 respiratory subunits cytochrome b, cytochrome c1 and Rieske protein UQCRFS1, 2 core protein subunits UQCRC1/QCR1 and UQCRC2/QCR2, and 6 low-molecular weight protein subunits UQCRH/QCR6, UQCRB/QCR7, UQCRQ/QCR8, UQCR10/QCR9, UQCR11/QCR10 and subunit 9, the cleavage product of Rieske protein UQCRFS1 (By similarity). The complex exists as an obligatory dimer and forms supercomplexes (SCs) in the inner mitochondrial membrane with NADH-ubiquinone oxidoreductase (complex I, CI) and cytochrome c oxidase (complex IV, CIV), resulting in different assemblies (supercomplex SCI(1)III(2)IV(1) and megacomplex MCI(2)III(2)IV(2)) (PubMed:28844695).</text>
</comment>
<comment type="interaction">
    <interactant intactId="EBI-1224427">
        <id>P07919</id>
    </interactant>
    <interactant intactId="EBI-4401082">
        <id>Q96BM9</id>
        <label>ARL8A</label>
    </interactant>
    <organismsDiffer>false</organismsDiffer>
    <experiments>6</experiments>
</comment>
<comment type="interaction">
    <interactant intactId="EBI-1224427">
        <id>P07919</id>
    </interactant>
    <interactant intactId="EBI-10195448">
        <id>Q96H71</id>
        <label>ENTREP3</label>
    </interactant>
    <organismsDiffer>false</organismsDiffer>
    <experiments>3</experiments>
</comment>
<comment type="interaction">
    <interactant intactId="EBI-1224427">
        <id>P07919</id>
    </interactant>
    <interactant intactId="EBI-11732799">
        <id>Q9BT67</id>
        <label>NDFIP1</label>
    </interactant>
    <organismsDiffer>false</organismsDiffer>
    <experiments>3</experiments>
</comment>
<comment type="interaction">
    <interactant intactId="EBI-1224427">
        <id>P07919</id>
    </interactant>
    <interactant intactId="EBI-2933200">
        <id>Q9NV92</id>
        <label>NDFIP2</label>
    </interactant>
    <organismsDiffer>false</organismsDiffer>
    <experiments>3</experiments>
</comment>
<comment type="interaction">
    <interactant intactId="EBI-1224427">
        <id>P07919</id>
    </interactant>
    <interactant intactId="EBI-12111452">
        <id>O14668</id>
        <label>PRRG1</label>
    </interactant>
    <organismsDiffer>false</organismsDiffer>
    <experiments>3</experiments>
</comment>
<comment type="interaction">
    <interactant intactId="EBI-1224427">
        <id>P07919</id>
    </interactant>
    <interactant intactId="EBI-10195462">
        <id>Q9Y225</id>
        <label>RNF24</label>
    </interactant>
    <organismsDiffer>false</organismsDiffer>
    <experiments>3</experiments>
</comment>
<comment type="subcellular location">
    <subcellularLocation>
        <location evidence="2">Mitochondrion inner membrane</location>
        <topology evidence="2">Peripheral membrane protein</topology>
        <orientation evidence="2">Intermembrane side</orientation>
    </subcellularLocation>
</comment>
<comment type="disease" evidence="6">
    <disease id="DI-06551">
        <name>Mitochondrial complex III deficiency, nuclear type 11</name>
        <acronym>MC3DN11</acronym>
        <description>A form of mitochondrial complex III deficiency, a disorder of the mitochondrial respiratory chain resulting in a highly variable phenotype depending on which tissues are affected. MC3DN11 is an autosomal recessive form characterized by recurrent episodes of severe lactic acidosis, hyperammonemia, hypoglycemia, and encephalopathy.</description>
        <dbReference type="MIM" id="620137"/>
    </disease>
    <text>The disease may be caused by variants affecting the gene represented in this entry.</text>
</comment>
<comment type="similarity">
    <text evidence="7">Belongs to the UQCRH/QCR6 family.</text>
</comment>
<evidence type="ECO:0000250" key="1">
    <source>
        <dbReference type="UniProtKB" id="P00126"/>
    </source>
</evidence>
<evidence type="ECO:0000250" key="2">
    <source>
        <dbReference type="UniProtKB" id="P00127"/>
    </source>
</evidence>
<evidence type="ECO:0000250" key="3">
    <source>
        <dbReference type="UniProtKB" id="P99028"/>
    </source>
</evidence>
<evidence type="ECO:0000256" key="4">
    <source>
        <dbReference type="SAM" id="MobiDB-lite"/>
    </source>
</evidence>
<evidence type="ECO:0000269" key="5">
    <source>
    </source>
</evidence>
<evidence type="ECO:0000269" key="6">
    <source>
    </source>
</evidence>
<evidence type="ECO:0000305" key="7"/>
<evidence type="ECO:0007829" key="8">
    <source>
        <dbReference type="PDB" id="5XTE"/>
    </source>
</evidence>
<name>QCR6_HUMAN</name>
<sequence>MGLEDEQKMLTESGDPEEEEEEEEELVDPLTTVREQCEQLEKCVKARERLELCDERVSSRSHTEEDCTEELFDFLHARDHCVAHKLFNNLK</sequence>
<reference key="1">
    <citation type="journal article" date="1987" name="FEBS Lett.">
        <title>An extremely acidic amino-terminal presequence of the precursor for the human mitochondrial hinge protein.</title>
        <authorList>
            <person name="Ohta S."/>
            <person name="Goto K."/>
            <person name="Arai H."/>
            <person name="Kagawa Y."/>
        </authorList>
    </citation>
    <scope>NUCLEOTIDE SEQUENCE [MRNA]</scope>
</reference>
<reference key="2">
    <citation type="submission" date="2003-05" db="EMBL/GenBank/DDBJ databases">
        <title>Cloning of human full-length CDSs in BD Creator(TM) system donor vector.</title>
        <authorList>
            <person name="Kalnine N."/>
            <person name="Chen X."/>
            <person name="Rolfs A."/>
            <person name="Halleck A."/>
            <person name="Hines L."/>
            <person name="Eisenstein S."/>
            <person name="Koundinya M."/>
            <person name="Raphael J."/>
            <person name="Moreira D."/>
            <person name="Kelley T."/>
            <person name="LaBaer J."/>
            <person name="Lin Y."/>
            <person name="Phelan M."/>
            <person name="Farmer A."/>
        </authorList>
    </citation>
    <scope>NUCLEOTIDE SEQUENCE [LARGE SCALE MRNA]</scope>
</reference>
<reference key="3">
    <citation type="journal article" date="2004" name="Nat. Genet.">
        <title>Complete sequencing and characterization of 21,243 full-length human cDNAs.</title>
        <authorList>
            <person name="Ota T."/>
            <person name="Suzuki Y."/>
            <person name="Nishikawa T."/>
            <person name="Otsuki T."/>
            <person name="Sugiyama T."/>
            <person name="Irie R."/>
            <person name="Wakamatsu A."/>
            <person name="Hayashi K."/>
            <person name="Sato H."/>
            <person name="Nagai K."/>
            <person name="Kimura K."/>
            <person name="Makita H."/>
            <person name="Sekine M."/>
            <person name="Obayashi M."/>
            <person name="Nishi T."/>
            <person name="Shibahara T."/>
            <person name="Tanaka T."/>
            <person name="Ishii S."/>
            <person name="Yamamoto J."/>
            <person name="Saito K."/>
            <person name="Kawai Y."/>
            <person name="Isono Y."/>
            <person name="Nakamura Y."/>
            <person name="Nagahari K."/>
            <person name="Murakami K."/>
            <person name="Yasuda T."/>
            <person name="Iwayanagi T."/>
            <person name="Wagatsuma M."/>
            <person name="Shiratori A."/>
            <person name="Sudo H."/>
            <person name="Hosoiri T."/>
            <person name="Kaku Y."/>
            <person name="Kodaira H."/>
            <person name="Kondo H."/>
            <person name="Sugawara M."/>
            <person name="Takahashi M."/>
            <person name="Kanda K."/>
            <person name="Yokoi T."/>
            <person name="Furuya T."/>
            <person name="Kikkawa E."/>
            <person name="Omura Y."/>
            <person name="Abe K."/>
            <person name="Kamihara K."/>
            <person name="Katsuta N."/>
            <person name="Sato K."/>
            <person name="Tanikawa M."/>
            <person name="Yamazaki M."/>
            <person name="Ninomiya K."/>
            <person name="Ishibashi T."/>
            <person name="Yamashita H."/>
            <person name="Murakawa K."/>
            <person name="Fujimori K."/>
            <person name="Tanai H."/>
            <person name="Kimata M."/>
            <person name="Watanabe M."/>
            <person name="Hiraoka S."/>
            <person name="Chiba Y."/>
            <person name="Ishida S."/>
            <person name="Ono Y."/>
            <person name="Takiguchi S."/>
            <person name="Watanabe S."/>
            <person name="Yosida M."/>
            <person name="Hotuta T."/>
            <person name="Kusano J."/>
            <person name="Kanehori K."/>
            <person name="Takahashi-Fujii A."/>
            <person name="Hara H."/>
            <person name="Tanase T.-O."/>
            <person name="Nomura Y."/>
            <person name="Togiya S."/>
            <person name="Komai F."/>
            <person name="Hara R."/>
            <person name="Takeuchi K."/>
            <person name="Arita M."/>
            <person name="Imose N."/>
            <person name="Musashino K."/>
            <person name="Yuuki H."/>
            <person name="Oshima A."/>
            <person name="Sasaki N."/>
            <person name="Aotsuka S."/>
            <person name="Yoshikawa Y."/>
            <person name="Matsunawa H."/>
            <person name="Ichihara T."/>
            <person name="Shiohata N."/>
            <person name="Sano S."/>
            <person name="Moriya S."/>
            <person name="Momiyama H."/>
            <person name="Satoh N."/>
            <person name="Takami S."/>
            <person name="Terashima Y."/>
            <person name="Suzuki O."/>
            <person name="Nakagawa S."/>
            <person name="Senoh A."/>
            <person name="Mizoguchi H."/>
            <person name="Goto Y."/>
            <person name="Shimizu F."/>
            <person name="Wakebe H."/>
            <person name="Hishigaki H."/>
            <person name="Watanabe T."/>
            <person name="Sugiyama A."/>
            <person name="Takemoto M."/>
            <person name="Kawakami B."/>
            <person name="Yamazaki M."/>
            <person name="Watanabe K."/>
            <person name="Kumagai A."/>
            <person name="Itakura S."/>
            <person name="Fukuzumi Y."/>
            <person name="Fujimori Y."/>
            <person name="Komiyama M."/>
            <person name="Tashiro H."/>
            <person name="Tanigami A."/>
            <person name="Fujiwara T."/>
            <person name="Ono T."/>
            <person name="Yamada K."/>
            <person name="Fujii Y."/>
            <person name="Ozaki K."/>
            <person name="Hirao M."/>
            <person name="Ohmori Y."/>
            <person name="Kawabata A."/>
            <person name="Hikiji T."/>
            <person name="Kobatake N."/>
            <person name="Inagaki H."/>
            <person name="Ikema Y."/>
            <person name="Okamoto S."/>
            <person name="Okitani R."/>
            <person name="Kawakami T."/>
            <person name="Noguchi S."/>
            <person name="Itoh T."/>
            <person name="Shigeta K."/>
            <person name="Senba T."/>
            <person name="Matsumura K."/>
            <person name="Nakajima Y."/>
            <person name="Mizuno T."/>
            <person name="Morinaga M."/>
            <person name="Sasaki M."/>
            <person name="Togashi T."/>
            <person name="Oyama M."/>
            <person name="Hata H."/>
            <person name="Watanabe M."/>
            <person name="Komatsu T."/>
            <person name="Mizushima-Sugano J."/>
            <person name="Satoh T."/>
            <person name="Shirai Y."/>
            <person name="Takahashi Y."/>
            <person name="Nakagawa K."/>
            <person name="Okumura K."/>
            <person name="Nagase T."/>
            <person name="Nomura N."/>
            <person name="Kikuchi H."/>
            <person name="Masuho Y."/>
            <person name="Yamashita R."/>
            <person name="Nakai K."/>
            <person name="Yada T."/>
            <person name="Nakamura Y."/>
            <person name="Ohara O."/>
            <person name="Isogai T."/>
            <person name="Sugano S."/>
        </authorList>
    </citation>
    <scope>NUCLEOTIDE SEQUENCE [LARGE SCALE MRNA]</scope>
</reference>
<reference key="4">
    <citation type="journal article" date="2006" name="Nature">
        <title>The DNA sequence and biological annotation of human chromosome 1.</title>
        <authorList>
            <person name="Gregory S.G."/>
            <person name="Barlow K.F."/>
            <person name="McLay K.E."/>
            <person name="Kaul R."/>
            <person name="Swarbreck D."/>
            <person name="Dunham A."/>
            <person name="Scott C.E."/>
            <person name="Howe K.L."/>
            <person name="Woodfine K."/>
            <person name="Spencer C.C.A."/>
            <person name="Jones M.C."/>
            <person name="Gillson C."/>
            <person name="Searle S."/>
            <person name="Zhou Y."/>
            <person name="Kokocinski F."/>
            <person name="McDonald L."/>
            <person name="Evans R."/>
            <person name="Phillips K."/>
            <person name="Atkinson A."/>
            <person name="Cooper R."/>
            <person name="Jones C."/>
            <person name="Hall R.E."/>
            <person name="Andrews T.D."/>
            <person name="Lloyd C."/>
            <person name="Ainscough R."/>
            <person name="Almeida J.P."/>
            <person name="Ambrose K.D."/>
            <person name="Anderson F."/>
            <person name="Andrew R.W."/>
            <person name="Ashwell R.I.S."/>
            <person name="Aubin K."/>
            <person name="Babbage A.K."/>
            <person name="Bagguley C.L."/>
            <person name="Bailey J."/>
            <person name="Beasley H."/>
            <person name="Bethel G."/>
            <person name="Bird C.P."/>
            <person name="Bray-Allen S."/>
            <person name="Brown J.Y."/>
            <person name="Brown A.J."/>
            <person name="Buckley D."/>
            <person name="Burton J."/>
            <person name="Bye J."/>
            <person name="Carder C."/>
            <person name="Chapman J.C."/>
            <person name="Clark S.Y."/>
            <person name="Clarke G."/>
            <person name="Clee C."/>
            <person name="Cobley V."/>
            <person name="Collier R.E."/>
            <person name="Corby N."/>
            <person name="Coville G.J."/>
            <person name="Davies J."/>
            <person name="Deadman R."/>
            <person name="Dunn M."/>
            <person name="Earthrowl M."/>
            <person name="Ellington A.G."/>
            <person name="Errington H."/>
            <person name="Frankish A."/>
            <person name="Frankland J."/>
            <person name="French L."/>
            <person name="Garner P."/>
            <person name="Garnett J."/>
            <person name="Gay L."/>
            <person name="Ghori M.R.J."/>
            <person name="Gibson R."/>
            <person name="Gilby L.M."/>
            <person name="Gillett W."/>
            <person name="Glithero R.J."/>
            <person name="Grafham D.V."/>
            <person name="Griffiths C."/>
            <person name="Griffiths-Jones S."/>
            <person name="Grocock R."/>
            <person name="Hammond S."/>
            <person name="Harrison E.S.I."/>
            <person name="Hart E."/>
            <person name="Haugen E."/>
            <person name="Heath P.D."/>
            <person name="Holmes S."/>
            <person name="Holt K."/>
            <person name="Howden P.J."/>
            <person name="Hunt A.R."/>
            <person name="Hunt S.E."/>
            <person name="Hunter G."/>
            <person name="Isherwood J."/>
            <person name="James R."/>
            <person name="Johnson C."/>
            <person name="Johnson D."/>
            <person name="Joy A."/>
            <person name="Kay M."/>
            <person name="Kershaw J.K."/>
            <person name="Kibukawa M."/>
            <person name="Kimberley A.M."/>
            <person name="King A."/>
            <person name="Knights A.J."/>
            <person name="Lad H."/>
            <person name="Laird G."/>
            <person name="Lawlor S."/>
            <person name="Leongamornlert D.A."/>
            <person name="Lloyd D.M."/>
            <person name="Loveland J."/>
            <person name="Lovell J."/>
            <person name="Lush M.J."/>
            <person name="Lyne R."/>
            <person name="Martin S."/>
            <person name="Mashreghi-Mohammadi M."/>
            <person name="Matthews L."/>
            <person name="Matthews N.S.W."/>
            <person name="McLaren S."/>
            <person name="Milne S."/>
            <person name="Mistry S."/>
            <person name="Moore M.J.F."/>
            <person name="Nickerson T."/>
            <person name="O'Dell C.N."/>
            <person name="Oliver K."/>
            <person name="Palmeiri A."/>
            <person name="Palmer S.A."/>
            <person name="Parker A."/>
            <person name="Patel D."/>
            <person name="Pearce A.V."/>
            <person name="Peck A.I."/>
            <person name="Pelan S."/>
            <person name="Phelps K."/>
            <person name="Phillimore B.J."/>
            <person name="Plumb R."/>
            <person name="Rajan J."/>
            <person name="Raymond C."/>
            <person name="Rouse G."/>
            <person name="Saenphimmachak C."/>
            <person name="Sehra H.K."/>
            <person name="Sheridan E."/>
            <person name="Shownkeen R."/>
            <person name="Sims S."/>
            <person name="Skuce C.D."/>
            <person name="Smith M."/>
            <person name="Steward C."/>
            <person name="Subramanian S."/>
            <person name="Sycamore N."/>
            <person name="Tracey A."/>
            <person name="Tromans A."/>
            <person name="Van Helmond Z."/>
            <person name="Wall M."/>
            <person name="Wallis J.M."/>
            <person name="White S."/>
            <person name="Whitehead S.L."/>
            <person name="Wilkinson J.E."/>
            <person name="Willey D.L."/>
            <person name="Williams H."/>
            <person name="Wilming L."/>
            <person name="Wray P.W."/>
            <person name="Wu Z."/>
            <person name="Coulson A."/>
            <person name="Vaudin M."/>
            <person name="Sulston J.E."/>
            <person name="Durbin R.M."/>
            <person name="Hubbard T."/>
            <person name="Wooster R."/>
            <person name="Dunham I."/>
            <person name="Carter N.P."/>
            <person name="McVean G."/>
            <person name="Ross M.T."/>
            <person name="Harrow J."/>
            <person name="Olson M.V."/>
            <person name="Beck S."/>
            <person name="Rogers J."/>
            <person name="Bentley D.R."/>
        </authorList>
    </citation>
    <scope>NUCLEOTIDE SEQUENCE [LARGE SCALE GENOMIC DNA]</scope>
</reference>
<reference key="5">
    <citation type="submission" date="2005-09" db="EMBL/GenBank/DDBJ databases">
        <authorList>
            <person name="Mural R.J."/>
            <person name="Istrail S."/>
            <person name="Sutton G.G."/>
            <person name="Florea L."/>
            <person name="Halpern A.L."/>
            <person name="Mobarry C.M."/>
            <person name="Lippert R."/>
            <person name="Walenz B."/>
            <person name="Shatkay H."/>
            <person name="Dew I."/>
            <person name="Miller J.R."/>
            <person name="Flanigan M.J."/>
            <person name="Edwards N.J."/>
            <person name="Bolanos R."/>
            <person name="Fasulo D."/>
            <person name="Halldorsson B.V."/>
            <person name="Hannenhalli S."/>
            <person name="Turner R."/>
            <person name="Yooseph S."/>
            <person name="Lu F."/>
            <person name="Nusskern D.R."/>
            <person name="Shue B.C."/>
            <person name="Zheng X.H."/>
            <person name="Zhong F."/>
            <person name="Delcher A.L."/>
            <person name="Huson D.H."/>
            <person name="Kravitz S.A."/>
            <person name="Mouchard L."/>
            <person name="Reinert K."/>
            <person name="Remington K.A."/>
            <person name="Clark A.G."/>
            <person name="Waterman M.S."/>
            <person name="Eichler E.E."/>
            <person name="Adams M.D."/>
            <person name="Hunkapiller M.W."/>
            <person name="Myers E.W."/>
            <person name="Venter J.C."/>
        </authorList>
    </citation>
    <scope>NUCLEOTIDE SEQUENCE [LARGE SCALE GENOMIC DNA]</scope>
</reference>
<reference key="6">
    <citation type="journal article" date="2004" name="Genome Res.">
        <title>The status, quality, and expansion of the NIH full-length cDNA project: the Mammalian Gene Collection (MGC).</title>
        <authorList>
            <consortium name="The MGC Project Team"/>
        </authorList>
    </citation>
    <scope>NUCLEOTIDE SEQUENCE [LARGE SCALE MRNA]</scope>
    <source>
        <tissue>Lung</tissue>
        <tissue>Pancreas</tissue>
        <tissue>Placenta</tissue>
    </source>
</reference>
<reference key="7">
    <citation type="journal article" date="1993" name="Cancer Res.">
        <title>Elevated expression of the human mitochondrial hinge protein gene in cancer.</title>
        <authorList>
            <person name="Liu A.Y."/>
            <person name="Bradner R.C."/>
        </authorList>
    </citation>
    <scope>NUCLEOTIDE SEQUENCE [GENOMIC DNA] OF 1-56</scope>
</reference>
<reference key="8">
    <citation type="journal article" date="2006" name="Cell">
        <title>Global, in vivo, and site-specific phosphorylation dynamics in signaling networks.</title>
        <authorList>
            <person name="Olsen J.V."/>
            <person name="Blagoev B."/>
            <person name="Gnad F."/>
            <person name="Macek B."/>
            <person name="Kumar C."/>
            <person name="Mortensen P."/>
            <person name="Mann M."/>
        </authorList>
    </citation>
    <scope>IDENTIFICATION BY MASS SPECTROMETRY [LARGE SCALE ANALYSIS]</scope>
    <source>
        <tissue>Cervix carcinoma</tissue>
    </source>
</reference>
<reference key="9">
    <citation type="journal article" date="2008" name="Proc. Natl. Acad. Sci. U.S.A.">
        <title>A quantitative atlas of mitotic phosphorylation.</title>
        <authorList>
            <person name="Dephoure N."/>
            <person name="Zhou C."/>
            <person name="Villen J."/>
            <person name="Beausoleil S.A."/>
            <person name="Bakalarski C.E."/>
            <person name="Elledge S.J."/>
            <person name="Gygi S.P."/>
        </authorList>
    </citation>
    <scope>IDENTIFICATION BY MASS SPECTROMETRY [LARGE SCALE ANALYSIS]</scope>
    <source>
        <tissue>Cervix carcinoma</tissue>
    </source>
</reference>
<reference key="10">
    <citation type="journal article" date="2011" name="BMC Syst. Biol.">
        <title>Initial characterization of the human central proteome.</title>
        <authorList>
            <person name="Burkard T.R."/>
            <person name="Planyavsky M."/>
            <person name="Kaupe I."/>
            <person name="Breitwieser F.P."/>
            <person name="Buerckstuemmer T."/>
            <person name="Bennett K.L."/>
            <person name="Superti-Furga G."/>
            <person name="Colinge J."/>
        </authorList>
    </citation>
    <scope>IDENTIFICATION BY MASS SPECTROMETRY [LARGE SCALE ANALYSIS]</scope>
</reference>
<reference key="11">
    <citation type="journal article" date="2015" name="Proteomics">
        <title>N-terminome analysis of the human mitochondrial proteome.</title>
        <authorList>
            <person name="Vaca Jacome A.S."/>
            <person name="Rabilloud T."/>
            <person name="Schaeffer-Reiss C."/>
            <person name="Rompais M."/>
            <person name="Ayoub D."/>
            <person name="Lane L."/>
            <person name="Bairoch A."/>
            <person name="Van Dorsselaer A."/>
            <person name="Carapito C."/>
        </authorList>
    </citation>
    <scope>IDENTIFICATION BY MASS SPECTROMETRY [LARGE SCALE ANALYSIS]</scope>
</reference>
<reference key="12">
    <citation type="journal article" date="2021" name="EMBO Mol. Med.">
        <title>Characterising a homozygous two-exon deletion in UQCRH: comparing human and mouse phenotypes.</title>
        <authorList>
            <person name="Vidali S."/>
            <person name="Gerlini R."/>
            <person name="Thompson K."/>
            <person name="Urquhart J.E."/>
            <person name="Meisterknecht J."/>
            <person name="Aguilar-Pimentel J.A."/>
            <person name="Amarie O.V."/>
            <person name="Becker L."/>
            <person name="Breen C."/>
            <person name="Calzada-Wack J."/>
            <person name="Chhabra N.F."/>
            <person name="Cho Y.L."/>
            <person name="da Silva-Buttkus P."/>
            <person name="Feichtinger R.G."/>
            <person name="Gampe K."/>
            <person name="Garrett L."/>
            <person name="Hoefig K.P."/>
            <person name="Hoelter S.M."/>
            <person name="Jameson E."/>
            <person name="Klein-Rodewald T."/>
            <person name="Leuchtenberger S."/>
            <person name="Marschall S."/>
            <person name="Mayer-Kuckuk P."/>
            <person name="Miller G."/>
            <person name="Oestereicher M.A."/>
            <person name="Pfannes K."/>
            <person name="Rathkolb B."/>
            <person name="Rozman J."/>
            <person name="Sanders C."/>
            <person name="Spielmann N."/>
            <person name="Stoeger C."/>
            <person name="Szibor M."/>
            <person name="Treise I."/>
            <person name="Walter J.H."/>
            <person name="Wurst W."/>
            <person name="Mayr J.A."/>
            <person name="Fuchs H."/>
            <person name="Gaertner U."/>
            <person name="Wittig I."/>
            <person name="Taylor R.W."/>
            <person name="Newman W.G."/>
            <person name="Prokisch H."/>
            <person name="Gailus-Durner V."/>
            <person name="Hrabe de Angelis M."/>
        </authorList>
    </citation>
    <scope>INVOLVEMENT IN MC3DN11</scope>
    <scope>FUNCTION</scope>
</reference>
<reference key="13">
    <citation type="journal article" date="2017" name="Cell">
        <title>Architecture of human mitochondrial respiratory megacomplex I2III2IV2.</title>
        <authorList>
            <person name="Guo R."/>
            <person name="Zong S."/>
            <person name="Wu M."/>
            <person name="Gu J."/>
            <person name="Yang M."/>
        </authorList>
    </citation>
    <scope>STRUCTURE BY ELECTRON MICROSCOPY (3.40 ANGSTROMS) OF 17-91</scope>
</reference>
<proteinExistence type="evidence at protein level"/>
<protein>
    <recommendedName>
        <fullName>Cytochrome b-c1 complex subunit 6, mitochondrial</fullName>
    </recommendedName>
    <alternativeName>
        <fullName>Complex III subunit 6</fullName>
    </alternativeName>
    <alternativeName>
        <fullName>Complex III subunit VIII</fullName>
    </alternativeName>
    <alternativeName>
        <fullName>Cytochrome c1 non-heme 11 kDa protein</fullName>
    </alternativeName>
    <alternativeName>
        <fullName>Mitochondrial hinge protein</fullName>
    </alternativeName>
    <alternativeName>
        <fullName>Ubiquinol-cytochrome c reductase complex 11 kDa protein</fullName>
    </alternativeName>
</protein>